<gene>
    <name type="ordered locus">At3g24170</name>
    <name type="ORF">MUJ8.7</name>
</gene>
<organism>
    <name type="scientific">Arabidopsis thaliana</name>
    <name type="common">Mouse-ear cress</name>
    <dbReference type="NCBI Taxonomy" id="3702"/>
    <lineage>
        <taxon>Eukaryota</taxon>
        <taxon>Viridiplantae</taxon>
        <taxon>Streptophyta</taxon>
        <taxon>Embryophyta</taxon>
        <taxon>Tracheophyta</taxon>
        <taxon>Spermatophyta</taxon>
        <taxon>Magnoliopsida</taxon>
        <taxon>eudicotyledons</taxon>
        <taxon>Gunneridae</taxon>
        <taxon>Pentapetalae</taxon>
        <taxon>rosids</taxon>
        <taxon>malvids</taxon>
        <taxon>Brassicales</taxon>
        <taxon>Brassicaceae</taxon>
        <taxon>Camelineae</taxon>
        <taxon>Arabidopsis</taxon>
    </lineage>
</organism>
<accession>P48641</accession>
<accession>Q2V3T0</accession>
<accession>Q94BM6</accession>
<accession>Q9C5I4</accession>
<proteinExistence type="evidence at protein level"/>
<dbReference type="EC" id="1.8.1.7"/>
<dbReference type="EMBL" id="U37697">
    <property type="protein sequence ID" value="AAB67841.1"/>
    <property type="molecule type" value="mRNA"/>
</dbReference>
<dbReference type="EMBL" id="AB028621">
    <property type="protein sequence ID" value="BAB01358.1"/>
    <property type="molecule type" value="Genomic_DNA"/>
</dbReference>
<dbReference type="EMBL" id="CP002686">
    <property type="protein sequence ID" value="AEE76865.1"/>
    <property type="molecule type" value="Genomic_DNA"/>
</dbReference>
<dbReference type="EMBL" id="CP002686">
    <property type="protein sequence ID" value="AEE76866.1"/>
    <property type="molecule type" value="Genomic_DNA"/>
</dbReference>
<dbReference type="EMBL" id="CP002686">
    <property type="protein sequence ID" value="AEE76867.1"/>
    <property type="molecule type" value="Genomic_DNA"/>
</dbReference>
<dbReference type="EMBL" id="AF360228">
    <property type="protein sequence ID" value="AAK25938.1"/>
    <property type="molecule type" value="mRNA"/>
</dbReference>
<dbReference type="EMBL" id="AY040029">
    <property type="protein sequence ID" value="AAK64087.1"/>
    <property type="molecule type" value="mRNA"/>
</dbReference>
<dbReference type="EMBL" id="AY140042">
    <property type="protein sequence ID" value="AAM98183.1"/>
    <property type="molecule type" value="mRNA"/>
</dbReference>
<dbReference type="EMBL" id="AY142628">
    <property type="protein sequence ID" value="AAN13086.1"/>
    <property type="molecule type" value="mRNA"/>
</dbReference>
<dbReference type="EMBL" id="BT008870">
    <property type="protein sequence ID" value="AAP68309.1"/>
    <property type="molecule type" value="mRNA"/>
</dbReference>
<dbReference type="SMR" id="P48641"/>
<dbReference type="BioGRID" id="7335">
    <property type="interactions" value="11"/>
</dbReference>
<dbReference type="DIP" id="DIP-60756N"/>
<dbReference type="FunCoup" id="P48641">
    <property type="interactions" value="3010"/>
</dbReference>
<dbReference type="STRING" id="3702.P48641"/>
<dbReference type="MetOSite" id="P48641"/>
<dbReference type="PaxDb" id="3702-AT3G24170.1"/>
<dbReference type="ProteomicsDB" id="247184"/>
<dbReference type="EnsemblPlants" id="AT3G24170.1">
    <property type="protein sequence ID" value="AT3G24170.1"/>
    <property type="gene ID" value="AT3G24170"/>
</dbReference>
<dbReference type="EnsemblPlants" id="AT3G24170.2">
    <property type="protein sequence ID" value="AT3G24170.2"/>
    <property type="gene ID" value="AT3G24170"/>
</dbReference>
<dbReference type="EnsemblPlants" id="AT3G24170.3">
    <property type="protein sequence ID" value="AT3G24170.3"/>
    <property type="gene ID" value="AT3G24170"/>
</dbReference>
<dbReference type="Gramene" id="AT3G24170.1">
    <property type="protein sequence ID" value="AT3G24170.1"/>
    <property type="gene ID" value="AT3G24170"/>
</dbReference>
<dbReference type="Gramene" id="AT3G24170.2">
    <property type="protein sequence ID" value="AT3G24170.2"/>
    <property type="gene ID" value="AT3G24170"/>
</dbReference>
<dbReference type="Gramene" id="AT3G24170.3">
    <property type="protein sequence ID" value="AT3G24170.3"/>
    <property type="gene ID" value="AT3G24170"/>
</dbReference>
<dbReference type="KEGG" id="ath:AT3G24170"/>
<dbReference type="Araport" id="AT3G24170"/>
<dbReference type="TAIR" id="AT3G24170">
    <property type="gene designation" value="GR1"/>
</dbReference>
<dbReference type="eggNOG" id="KOG0405">
    <property type="taxonomic scope" value="Eukaryota"/>
</dbReference>
<dbReference type="HOGENOM" id="CLU_016755_2_3_1"/>
<dbReference type="InParanoid" id="P48641"/>
<dbReference type="OMA" id="NYHKLAD"/>
<dbReference type="OrthoDB" id="5956163at2759"/>
<dbReference type="PhylomeDB" id="P48641"/>
<dbReference type="BioCyc" id="ARA:AT3G24170-MONOMER"/>
<dbReference type="CD-CODE" id="4299E36E">
    <property type="entry name" value="Nucleolus"/>
</dbReference>
<dbReference type="PRO" id="PR:P48641"/>
<dbReference type="Proteomes" id="UP000006548">
    <property type="component" value="Chromosome 3"/>
</dbReference>
<dbReference type="ExpressionAtlas" id="P48641">
    <property type="expression patterns" value="baseline and differential"/>
</dbReference>
<dbReference type="GO" id="GO:0005829">
    <property type="term" value="C:cytosol"/>
    <property type="evidence" value="ECO:0007005"/>
    <property type="project" value="TAIR"/>
</dbReference>
<dbReference type="GO" id="GO:0005777">
    <property type="term" value="C:peroxisome"/>
    <property type="evidence" value="ECO:0007005"/>
    <property type="project" value="TAIR"/>
</dbReference>
<dbReference type="GO" id="GO:0050660">
    <property type="term" value="F:flavin adenine dinucleotide binding"/>
    <property type="evidence" value="ECO:0007669"/>
    <property type="project" value="InterPro"/>
</dbReference>
<dbReference type="GO" id="GO:0004362">
    <property type="term" value="F:glutathione-disulfide reductase (NADPH) activity"/>
    <property type="evidence" value="ECO:0000314"/>
    <property type="project" value="TAIR"/>
</dbReference>
<dbReference type="GO" id="GO:0050661">
    <property type="term" value="F:NADP binding"/>
    <property type="evidence" value="ECO:0007669"/>
    <property type="project" value="InterPro"/>
</dbReference>
<dbReference type="GO" id="GO:0045454">
    <property type="term" value="P:cell redox homeostasis"/>
    <property type="evidence" value="ECO:0007669"/>
    <property type="project" value="InterPro"/>
</dbReference>
<dbReference type="GO" id="GO:0006749">
    <property type="term" value="P:glutathione metabolic process"/>
    <property type="evidence" value="ECO:0007669"/>
    <property type="project" value="InterPro"/>
</dbReference>
<dbReference type="FunFam" id="3.30.390.30:FF:000008">
    <property type="entry name" value="Glutathione reductase"/>
    <property type="match status" value="1"/>
</dbReference>
<dbReference type="FunFam" id="3.50.50.60:FF:000051">
    <property type="entry name" value="Glutathione reductase"/>
    <property type="match status" value="1"/>
</dbReference>
<dbReference type="Gene3D" id="3.30.390.30">
    <property type="match status" value="1"/>
</dbReference>
<dbReference type="Gene3D" id="3.50.50.60">
    <property type="entry name" value="FAD/NAD(P)-binding domain"/>
    <property type="match status" value="2"/>
</dbReference>
<dbReference type="InterPro" id="IPR036188">
    <property type="entry name" value="FAD/NAD-bd_sf"/>
</dbReference>
<dbReference type="InterPro" id="IPR023753">
    <property type="entry name" value="FAD/NAD-binding_dom"/>
</dbReference>
<dbReference type="InterPro" id="IPR016156">
    <property type="entry name" value="FAD/NAD-linked_Rdtase_dimer_sf"/>
</dbReference>
<dbReference type="InterPro" id="IPR006324">
    <property type="entry name" value="GSHR"/>
</dbReference>
<dbReference type="InterPro" id="IPR046952">
    <property type="entry name" value="GSHR/TRXR-like"/>
</dbReference>
<dbReference type="InterPro" id="IPR001100">
    <property type="entry name" value="Pyr_nuc-diS_OxRdtase"/>
</dbReference>
<dbReference type="InterPro" id="IPR004099">
    <property type="entry name" value="Pyr_nucl-diS_OxRdtase_dimer"/>
</dbReference>
<dbReference type="InterPro" id="IPR012999">
    <property type="entry name" value="Pyr_OxRdtase_I_AS"/>
</dbReference>
<dbReference type="NCBIfam" id="TIGR01424">
    <property type="entry name" value="gluta_reduc_2"/>
    <property type="match status" value="1"/>
</dbReference>
<dbReference type="NCBIfam" id="NF004776">
    <property type="entry name" value="PRK06116.1"/>
    <property type="match status" value="1"/>
</dbReference>
<dbReference type="PANTHER" id="PTHR42737">
    <property type="entry name" value="GLUTATHIONE REDUCTASE"/>
    <property type="match status" value="1"/>
</dbReference>
<dbReference type="PANTHER" id="PTHR42737:SF2">
    <property type="entry name" value="GLUTATHIONE REDUCTASE"/>
    <property type="match status" value="1"/>
</dbReference>
<dbReference type="Pfam" id="PF07992">
    <property type="entry name" value="Pyr_redox_2"/>
    <property type="match status" value="1"/>
</dbReference>
<dbReference type="Pfam" id="PF02852">
    <property type="entry name" value="Pyr_redox_dim"/>
    <property type="match status" value="1"/>
</dbReference>
<dbReference type="PIRSF" id="PIRSF000350">
    <property type="entry name" value="Mercury_reductase_MerA"/>
    <property type="match status" value="1"/>
</dbReference>
<dbReference type="PRINTS" id="PR00368">
    <property type="entry name" value="FADPNR"/>
</dbReference>
<dbReference type="PRINTS" id="PR00411">
    <property type="entry name" value="PNDRDTASEI"/>
</dbReference>
<dbReference type="SUPFAM" id="SSF51905">
    <property type="entry name" value="FAD/NAD(P)-binding domain"/>
    <property type="match status" value="1"/>
</dbReference>
<dbReference type="SUPFAM" id="SSF55424">
    <property type="entry name" value="FAD/NAD-linked reductases, dimerisation (C-terminal) domain"/>
    <property type="match status" value="1"/>
</dbReference>
<dbReference type="PROSITE" id="PS00076">
    <property type="entry name" value="PYRIDINE_REDOX_1"/>
    <property type="match status" value="1"/>
</dbReference>
<evidence type="ECO:0000250" key="1">
    <source>
        <dbReference type="UniProtKB" id="P00390"/>
    </source>
</evidence>
<evidence type="ECO:0000250" key="2">
    <source>
        <dbReference type="UniProtKB" id="P06715"/>
    </source>
</evidence>
<evidence type="ECO:0000305" key="3"/>
<comment type="function">
    <text evidence="2">Catalyzes the reduction of glutathione disulfide (GSSG) to reduced glutathione (GSH). Constitutes the major mechanism to maintain a high GSH:GSSG ratio in the cytosol.</text>
</comment>
<comment type="catalytic activity">
    <reaction evidence="2">
        <text>2 glutathione + NADP(+) = glutathione disulfide + NADPH + H(+)</text>
        <dbReference type="Rhea" id="RHEA:11740"/>
        <dbReference type="ChEBI" id="CHEBI:15378"/>
        <dbReference type="ChEBI" id="CHEBI:57783"/>
        <dbReference type="ChEBI" id="CHEBI:57925"/>
        <dbReference type="ChEBI" id="CHEBI:58297"/>
        <dbReference type="ChEBI" id="CHEBI:58349"/>
        <dbReference type="EC" id="1.8.1.7"/>
    </reaction>
</comment>
<comment type="cofactor">
    <cofactor evidence="2">
        <name>FAD</name>
        <dbReference type="ChEBI" id="CHEBI:57692"/>
    </cofactor>
    <text evidence="2">Binds 1 FAD per subunit.</text>
</comment>
<comment type="subunit">
    <text evidence="2">Homodimer.</text>
</comment>
<comment type="subcellular location">
    <subcellularLocation>
        <location evidence="3">Cytoplasm</location>
    </subcellularLocation>
</comment>
<comment type="miscellaneous">
    <text evidence="2">The active site is a redox-active disulfide bond.</text>
</comment>
<comment type="similarity">
    <text evidence="3">Belongs to the class-I pyridine nucleotide-disulfide oxidoreductase family.</text>
</comment>
<protein>
    <recommendedName>
        <fullName>Glutathione reductase, cytosolic</fullName>
        <shortName>GR</shortName>
        <shortName>GRase</shortName>
        <ecNumber>1.8.1.7</ecNumber>
    </recommendedName>
    <alternativeName>
        <fullName>OBP29</fullName>
    </alternativeName>
</protein>
<sequence length="499" mass="53871">MARKMLVDGEIDKVAADEANATHYDFDLFVIGAGSGGVRAARFSANHGAKVGICELPFHPISSEEIGGVGGTCVIRGCVPKKILVYGATYGGELEDAKNYGWEINEKVDFTWKKLLQKKTDEILRLNNIYKRLLANAAVKLYEGEGRVVGPNEVEVRQIDGTKISYTAKHILIATGSRAQKPNIPGHELAITSDEALSLEEFPKRAIVLGGGYIAVEFASIWRGMGATVDLFFRKELPLRGFDDEMRALVARNLEGRGVNLHPQTSLTQLTKTDQGIKVISSHGEEFVADVVLFATGRSPNTKRLNLEAVGVELDQAGAVKVDEYSRTNIPSIWAVGDATNRINLTPVALMEATCFANTAFGGKPTKAEYSNVACAVFCIPPLAVVGLSEEEAVEQATGDILVFTSGFNPMKNTISGRQEKTLMKLIVDEKSDKVIGASMCGPDAAEIMQGIAIALKCGATKAQFDSTVGIHPSSAEEFVTMRSVTRRIAHKPKPKTNL</sequence>
<name>GSHRC_ARATH</name>
<reference key="1">
    <citation type="online journal article" date="1996" name="Plant Gene Register">
        <title>An Arabidopsis cDNA homologous to glutathione reductase.</title>
        <authorList>
            <person name="Loebler M."/>
        </authorList>
        <locator>PGR96-053</locator>
    </citation>
    <scope>NUCLEOTIDE SEQUENCE [MRNA]</scope>
    <source>
        <strain>cv. Columbia</strain>
        <tissue>Leaf</tissue>
    </source>
</reference>
<reference key="2">
    <citation type="journal article" date="2000" name="DNA Res.">
        <title>Structural analysis of Arabidopsis thaliana chromosome 3. I. Sequence features of the regions of 4,504,864 bp covered by sixty P1 and TAC clones.</title>
        <authorList>
            <person name="Sato S."/>
            <person name="Nakamura Y."/>
            <person name="Kaneko T."/>
            <person name="Katoh T."/>
            <person name="Asamizu E."/>
            <person name="Tabata S."/>
        </authorList>
    </citation>
    <scope>NUCLEOTIDE SEQUENCE [LARGE SCALE GENOMIC DNA]</scope>
    <source>
        <strain>cv. Columbia</strain>
    </source>
</reference>
<reference key="3">
    <citation type="journal article" date="2017" name="Plant J.">
        <title>Araport11: a complete reannotation of the Arabidopsis thaliana reference genome.</title>
        <authorList>
            <person name="Cheng C.Y."/>
            <person name="Krishnakumar V."/>
            <person name="Chan A.P."/>
            <person name="Thibaud-Nissen F."/>
            <person name="Schobel S."/>
            <person name="Town C.D."/>
        </authorList>
    </citation>
    <scope>GENOME REANNOTATION</scope>
    <source>
        <strain>cv. Columbia</strain>
    </source>
</reference>
<reference key="4">
    <citation type="journal article" date="2003" name="Science">
        <title>Empirical analysis of transcriptional activity in the Arabidopsis genome.</title>
        <authorList>
            <person name="Yamada K."/>
            <person name="Lim J."/>
            <person name="Dale J.M."/>
            <person name="Chen H."/>
            <person name="Shinn P."/>
            <person name="Palm C.J."/>
            <person name="Southwick A.M."/>
            <person name="Wu H.C."/>
            <person name="Kim C.J."/>
            <person name="Nguyen M."/>
            <person name="Pham P.K."/>
            <person name="Cheuk R.F."/>
            <person name="Karlin-Newmann G."/>
            <person name="Liu S.X."/>
            <person name="Lam B."/>
            <person name="Sakano H."/>
            <person name="Wu T."/>
            <person name="Yu G."/>
            <person name="Miranda M."/>
            <person name="Quach H.L."/>
            <person name="Tripp M."/>
            <person name="Chang C.H."/>
            <person name="Lee J.M."/>
            <person name="Toriumi M.J."/>
            <person name="Chan M.M."/>
            <person name="Tang C.C."/>
            <person name="Onodera C.S."/>
            <person name="Deng J.M."/>
            <person name="Akiyama K."/>
            <person name="Ansari Y."/>
            <person name="Arakawa T."/>
            <person name="Banh J."/>
            <person name="Banno F."/>
            <person name="Bowser L."/>
            <person name="Brooks S.Y."/>
            <person name="Carninci P."/>
            <person name="Chao Q."/>
            <person name="Choy N."/>
            <person name="Enju A."/>
            <person name="Goldsmith A.D."/>
            <person name="Gurjal M."/>
            <person name="Hansen N.F."/>
            <person name="Hayashizaki Y."/>
            <person name="Johnson-Hopson C."/>
            <person name="Hsuan V.W."/>
            <person name="Iida K."/>
            <person name="Karnes M."/>
            <person name="Khan S."/>
            <person name="Koesema E."/>
            <person name="Ishida J."/>
            <person name="Jiang P.X."/>
            <person name="Jones T."/>
            <person name="Kawai J."/>
            <person name="Kamiya A."/>
            <person name="Meyers C."/>
            <person name="Nakajima M."/>
            <person name="Narusaka M."/>
            <person name="Seki M."/>
            <person name="Sakurai T."/>
            <person name="Satou M."/>
            <person name="Tamse R."/>
            <person name="Vaysberg M."/>
            <person name="Wallender E.K."/>
            <person name="Wong C."/>
            <person name="Yamamura Y."/>
            <person name="Yuan S."/>
            <person name="Shinozaki K."/>
            <person name="Davis R.W."/>
            <person name="Theologis A."/>
            <person name="Ecker J.R."/>
        </authorList>
    </citation>
    <scope>NUCLEOTIDE SEQUENCE [LARGE SCALE MRNA]</scope>
    <source>
        <strain>cv. Columbia</strain>
    </source>
</reference>
<reference key="5">
    <citation type="journal article" date="2007" name="Plant Cell">
        <title>Proteome analysis of Arabidopsis leaf peroxisomes reveals novel targeting peptides, metabolic pathways, and defense mechanisms.</title>
        <authorList>
            <person name="Reumann S."/>
            <person name="Babujee L."/>
            <person name="Ma C."/>
            <person name="Wienkoop S."/>
            <person name="Siemsen T."/>
            <person name="Antonicelli G.E."/>
            <person name="Rasche N."/>
            <person name="Lueder F."/>
            <person name="Weckwerth W."/>
            <person name="Jahn O."/>
        </authorList>
    </citation>
    <scope>IDENTIFICATION BY MASS SPECTROMETRY</scope>
</reference>
<keyword id="KW-0963">Cytoplasm</keyword>
<keyword id="KW-1015">Disulfide bond</keyword>
<keyword id="KW-0274">FAD</keyword>
<keyword id="KW-0285">Flavoprotein</keyword>
<keyword id="KW-0521">NADP</keyword>
<keyword id="KW-0560">Oxidoreductase</keyword>
<keyword id="KW-0676">Redox-active center</keyword>
<keyword id="KW-1185">Reference proteome</keyword>
<feature type="chain" id="PRO_0000067961" description="Glutathione reductase, cytosolic">
    <location>
        <begin position="1"/>
        <end position="499"/>
    </location>
</feature>
<feature type="active site" description="Proton acceptor" evidence="1">
    <location>
        <position position="472"/>
    </location>
</feature>
<feature type="binding site" evidence="2">
    <location>
        <position position="35"/>
    </location>
    <ligand>
        <name>FAD</name>
        <dbReference type="ChEBI" id="CHEBI:57692"/>
    </ligand>
</feature>
<feature type="binding site" evidence="1">
    <location>
        <position position="35"/>
    </location>
    <ligand>
        <name>glutathione</name>
        <dbReference type="ChEBI" id="CHEBI:57925"/>
    </ligand>
</feature>
<feature type="binding site" evidence="2">
    <location>
        <position position="36"/>
    </location>
    <ligand>
        <name>FAD</name>
        <dbReference type="ChEBI" id="CHEBI:57692"/>
    </ligand>
</feature>
<feature type="binding site" evidence="2">
    <location>
        <position position="55"/>
    </location>
    <ligand>
        <name>FAD</name>
        <dbReference type="ChEBI" id="CHEBI:57692"/>
    </ligand>
</feature>
<feature type="binding site" evidence="2">
    <location>
        <position position="72"/>
    </location>
    <ligand>
        <name>FAD</name>
        <dbReference type="ChEBI" id="CHEBI:57692"/>
    </ligand>
</feature>
<feature type="binding site" evidence="2">
    <location>
        <position position="73"/>
    </location>
    <ligand>
        <name>FAD</name>
        <dbReference type="ChEBI" id="CHEBI:57692"/>
    </ligand>
</feature>
<feature type="binding site" evidence="2">
    <location>
        <position position="81"/>
    </location>
    <ligand>
        <name>FAD</name>
        <dbReference type="ChEBI" id="CHEBI:57692"/>
    </ligand>
</feature>
<feature type="binding site" evidence="1">
    <location>
        <position position="130"/>
    </location>
    <ligand>
        <name>glutathione</name>
        <dbReference type="ChEBI" id="CHEBI:57925"/>
    </ligand>
</feature>
<feature type="binding site" evidence="2">
    <location>
        <position position="146"/>
    </location>
    <ligand>
        <name>FAD</name>
        <dbReference type="ChEBI" id="CHEBI:57692"/>
    </ligand>
</feature>
<feature type="binding site" evidence="2">
    <location>
        <position position="211"/>
    </location>
    <ligand>
        <name>NADP(+)</name>
        <dbReference type="ChEBI" id="CHEBI:58349"/>
    </ligand>
</feature>
<feature type="binding site" evidence="2">
    <location>
        <position position="214"/>
    </location>
    <ligand>
        <name>NADP(+)</name>
        <dbReference type="ChEBI" id="CHEBI:58349"/>
    </ligand>
</feature>
<feature type="binding site" evidence="2">
    <location>
        <position position="217"/>
    </location>
    <ligand>
        <name>NADP(+)</name>
        <dbReference type="ChEBI" id="CHEBI:58349"/>
    </ligand>
</feature>
<feature type="binding site" evidence="2">
    <location>
        <position position="234"/>
    </location>
    <ligand>
        <name>NADP(+)</name>
        <dbReference type="ChEBI" id="CHEBI:58349"/>
    </ligand>
</feature>
<feature type="binding site" evidence="2">
    <location>
        <position position="240"/>
    </location>
    <ligand>
        <name>NADP(+)</name>
        <dbReference type="ChEBI" id="CHEBI:58349"/>
    </ligand>
</feature>
<feature type="binding site" evidence="2">
    <location>
        <position position="297"/>
    </location>
    <ligand>
        <name>NADP(+)</name>
        <dbReference type="ChEBI" id="CHEBI:58349"/>
    </ligand>
</feature>
<feature type="binding site" evidence="2">
    <location>
        <position position="338"/>
    </location>
    <ligand>
        <name>FAD</name>
        <dbReference type="ChEBI" id="CHEBI:57692"/>
    </ligand>
</feature>
<feature type="binding site" evidence="2">
    <location>
        <position position="346"/>
    </location>
    <ligand>
        <name>FAD</name>
        <dbReference type="ChEBI" id="CHEBI:57692"/>
    </ligand>
</feature>
<feature type="binding site" evidence="2">
    <location>
        <position position="376"/>
    </location>
    <ligand>
        <name>NADP(+)</name>
        <dbReference type="ChEBI" id="CHEBI:58349"/>
    </ligand>
</feature>
<feature type="binding site" evidence="2">
    <location>
        <position position="472"/>
    </location>
    <ligand>
        <name>FAD</name>
        <dbReference type="ChEBI" id="CHEBI:57692"/>
    </ligand>
</feature>
<feature type="disulfide bond" description="Redox-active" evidence="2">
    <location>
        <begin position="73"/>
        <end position="78"/>
    </location>
</feature>
<feature type="sequence conflict" description="In Ref. 4; AAK25938/AAK64087." evidence="3" ref="4">
    <original>T</original>
    <variation>A</variation>
    <location>
        <position position="162"/>
    </location>
</feature>